<sequence>MTVRVAINGFGRIGRNVVRALYESGRRAEITVVAINELADAAGMAHLLKYDTSHGRFAWEVRQERDQLFVGDDAIRVLHERSLQSLPWRELGVDVVLDCTGVYGSREHGEAHIAAGAKKVLFSHPGSNDLDTTVVYGVNQDQLRAEHRIVSNASCTTNCIIPVIKLLDDAYGIESGTVTTIHSAMHDQQVIDAYHPDLRRTRAASQSIIPVDTKLAAGITRFFPQFNDRFEAIAVRVPTINVTAIDLSVTVKKPVKANEVNLLLQKAAQGAFHGIVDYTELPLVSVDFNHDPHSAIVDGTQTRVSGAHLIKTLVWCDNEWGFANRMLDTTLAMATVAFR</sequence>
<dbReference type="EC" id="1.2.1.72" evidence="1"/>
<dbReference type="EMBL" id="FM180568">
    <property type="protein sequence ID" value="CAS10722.1"/>
    <property type="molecule type" value="Genomic_DNA"/>
</dbReference>
<dbReference type="RefSeq" id="WP_000218483.1">
    <property type="nucleotide sequence ID" value="NC_011601.1"/>
</dbReference>
<dbReference type="SMR" id="B7UHW9"/>
<dbReference type="KEGG" id="ecg:E2348C_3174"/>
<dbReference type="HOGENOM" id="CLU_030140_0_2_6"/>
<dbReference type="UniPathway" id="UPA00244">
    <property type="reaction ID" value="UER00309"/>
</dbReference>
<dbReference type="Proteomes" id="UP000008205">
    <property type="component" value="Chromosome"/>
</dbReference>
<dbReference type="GO" id="GO:0005737">
    <property type="term" value="C:cytoplasm"/>
    <property type="evidence" value="ECO:0007669"/>
    <property type="project" value="UniProtKB-SubCell"/>
</dbReference>
<dbReference type="GO" id="GO:0048001">
    <property type="term" value="F:erythrose-4-phosphate dehydrogenase activity"/>
    <property type="evidence" value="ECO:0007669"/>
    <property type="project" value="UniProtKB-UniRule"/>
</dbReference>
<dbReference type="GO" id="GO:0051287">
    <property type="term" value="F:NAD binding"/>
    <property type="evidence" value="ECO:0007669"/>
    <property type="project" value="InterPro"/>
</dbReference>
<dbReference type="GO" id="GO:0042823">
    <property type="term" value="P:pyridoxal phosphate biosynthetic process"/>
    <property type="evidence" value="ECO:0007669"/>
    <property type="project" value="UniProtKB-UniRule"/>
</dbReference>
<dbReference type="GO" id="GO:0008615">
    <property type="term" value="P:pyridoxine biosynthetic process"/>
    <property type="evidence" value="ECO:0007669"/>
    <property type="project" value="UniProtKB-UniRule"/>
</dbReference>
<dbReference type="CDD" id="cd23937">
    <property type="entry name" value="GAPDH_C_E4PDH"/>
    <property type="match status" value="1"/>
</dbReference>
<dbReference type="CDD" id="cd17892">
    <property type="entry name" value="GAPDH_N_E4PDH"/>
    <property type="match status" value="1"/>
</dbReference>
<dbReference type="FunFam" id="3.30.360.10:FF:000007">
    <property type="entry name" value="D-erythrose-4-phosphate dehydrogenase"/>
    <property type="match status" value="1"/>
</dbReference>
<dbReference type="FunFam" id="3.40.50.720:FF:000001">
    <property type="entry name" value="Glyceraldehyde-3-phosphate dehydrogenase"/>
    <property type="match status" value="1"/>
</dbReference>
<dbReference type="Gene3D" id="3.30.360.10">
    <property type="entry name" value="Dihydrodipicolinate Reductase, domain 2"/>
    <property type="match status" value="1"/>
</dbReference>
<dbReference type="Gene3D" id="3.40.50.720">
    <property type="entry name" value="NAD(P)-binding Rossmann-like Domain"/>
    <property type="match status" value="1"/>
</dbReference>
<dbReference type="HAMAP" id="MF_01640">
    <property type="entry name" value="E4P_dehydrog"/>
    <property type="match status" value="1"/>
</dbReference>
<dbReference type="InterPro" id="IPR006422">
    <property type="entry name" value="E4P_DH_bac"/>
</dbReference>
<dbReference type="InterPro" id="IPR020831">
    <property type="entry name" value="GlycerAld/Erythrose_P_DH"/>
</dbReference>
<dbReference type="InterPro" id="IPR020830">
    <property type="entry name" value="GlycerAld_3-P_DH_AS"/>
</dbReference>
<dbReference type="InterPro" id="IPR020829">
    <property type="entry name" value="GlycerAld_3-P_DH_cat"/>
</dbReference>
<dbReference type="InterPro" id="IPR020828">
    <property type="entry name" value="GlycerAld_3-P_DH_NAD(P)-bd"/>
</dbReference>
<dbReference type="InterPro" id="IPR036291">
    <property type="entry name" value="NAD(P)-bd_dom_sf"/>
</dbReference>
<dbReference type="NCBIfam" id="TIGR01532">
    <property type="entry name" value="E4PD_g-proteo"/>
    <property type="match status" value="1"/>
</dbReference>
<dbReference type="NCBIfam" id="NF010058">
    <property type="entry name" value="PRK13535.1"/>
    <property type="match status" value="1"/>
</dbReference>
<dbReference type="PANTHER" id="PTHR43148">
    <property type="entry name" value="GLYCERALDEHYDE-3-PHOSPHATE DEHYDROGENASE 2"/>
    <property type="match status" value="1"/>
</dbReference>
<dbReference type="Pfam" id="PF02800">
    <property type="entry name" value="Gp_dh_C"/>
    <property type="match status" value="1"/>
</dbReference>
<dbReference type="Pfam" id="PF00044">
    <property type="entry name" value="Gp_dh_N"/>
    <property type="match status" value="1"/>
</dbReference>
<dbReference type="PIRSF" id="PIRSF000149">
    <property type="entry name" value="GAP_DH"/>
    <property type="match status" value="1"/>
</dbReference>
<dbReference type="PRINTS" id="PR00078">
    <property type="entry name" value="G3PDHDRGNASE"/>
</dbReference>
<dbReference type="SMART" id="SM00846">
    <property type="entry name" value="Gp_dh_N"/>
    <property type="match status" value="1"/>
</dbReference>
<dbReference type="SUPFAM" id="SSF55347">
    <property type="entry name" value="Glyceraldehyde-3-phosphate dehydrogenase-like, C-terminal domain"/>
    <property type="match status" value="1"/>
</dbReference>
<dbReference type="SUPFAM" id="SSF51735">
    <property type="entry name" value="NAD(P)-binding Rossmann-fold domains"/>
    <property type="match status" value="1"/>
</dbReference>
<dbReference type="PROSITE" id="PS00071">
    <property type="entry name" value="GAPDH"/>
    <property type="match status" value="1"/>
</dbReference>
<proteinExistence type="inferred from homology"/>
<evidence type="ECO:0000255" key="1">
    <source>
        <dbReference type="HAMAP-Rule" id="MF_01640"/>
    </source>
</evidence>
<keyword id="KW-0963">Cytoplasm</keyword>
<keyword id="KW-0520">NAD</keyword>
<keyword id="KW-0560">Oxidoreductase</keyword>
<keyword id="KW-0664">Pyridoxine biosynthesis</keyword>
<keyword id="KW-1185">Reference proteome</keyword>
<protein>
    <recommendedName>
        <fullName evidence="1">D-erythrose-4-phosphate dehydrogenase</fullName>
        <shortName evidence="1">E4PDH</shortName>
        <ecNumber evidence="1">1.2.1.72</ecNumber>
    </recommendedName>
</protein>
<comment type="function">
    <text evidence="1">Catalyzes the NAD-dependent conversion of D-erythrose 4-phosphate to 4-phosphoerythronate.</text>
</comment>
<comment type="catalytic activity">
    <reaction evidence="1">
        <text>D-erythrose 4-phosphate + NAD(+) + H2O = 4-phospho-D-erythronate + NADH + 2 H(+)</text>
        <dbReference type="Rhea" id="RHEA:12056"/>
        <dbReference type="ChEBI" id="CHEBI:15377"/>
        <dbReference type="ChEBI" id="CHEBI:15378"/>
        <dbReference type="ChEBI" id="CHEBI:16897"/>
        <dbReference type="ChEBI" id="CHEBI:57540"/>
        <dbReference type="ChEBI" id="CHEBI:57945"/>
        <dbReference type="ChEBI" id="CHEBI:58766"/>
        <dbReference type="EC" id="1.2.1.72"/>
    </reaction>
</comment>
<comment type="pathway">
    <text evidence="1">Cofactor biosynthesis; pyridoxine 5'-phosphate biosynthesis; pyridoxine 5'-phosphate from D-erythrose 4-phosphate: step 1/5.</text>
</comment>
<comment type="subunit">
    <text evidence="1">Homotetramer.</text>
</comment>
<comment type="subcellular location">
    <subcellularLocation>
        <location evidence="1">Cytoplasm</location>
    </subcellularLocation>
</comment>
<comment type="similarity">
    <text evidence="1">Belongs to the glyceraldehyde-3-phosphate dehydrogenase family. Epd subfamily.</text>
</comment>
<accession>B7UHW9</accession>
<gene>
    <name evidence="1" type="primary">epd</name>
    <name type="ordered locus">E2348C_3174</name>
</gene>
<feature type="chain" id="PRO_1000186817" description="D-erythrose-4-phosphate dehydrogenase">
    <location>
        <begin position="1"/>
        <end position="339"/>
    </location>
</feature>
<feature type="active site" description="Nucleophile" evidence="1">
    <location>
        <position position="155"/>
    </location>
</feature>
<feature type="binding site" evidence="1">
    <location>
        <begin position="12"/>
        <end position="13"/>
    </location>
    <ligand>
        <name>NAD(+)</name>
        <dbReference type="ChEBI" id="CHEBI:57540"/>
    </ligand>
</feature>
<feature type="binding site" evidence="1">
    <location>
        <position position="81"/>
    </location>
    <ligand>
        <name>NAD(+)</name>
        <dbReference type="ChEBI" id="CHEBI:57540"/>
    </ligand>
</feature>
<feature type="binding site" evidence="1">
    <location>
        <begin position="154"/>
        <end position="156"/>
    </location>
    <ligand>
        <name>substrate</name>
    </ligand>
</feature>
<feature type="binding site" evidence="1">
    <location>
        <position position="200"/>
    </location>
    <ligand>
        <name>substrate</name>
    </ligand>
</feature>
<feature type="binding site" evidence="1">
    <location>
        <begin position="213"/>
        <end position="214"/>
    </location>
    <ligand>
        <name>substrate</name>
    </ligand>
</feature>
<feature type="binding site" evidence="1">
    <location>
        <position position="236"/>
    </location>
    <ligand>
        <name>substrate</name>
    </ligand>
</feature>
<feature type="binding site" evidence="1">
    <location>
        <position position="318"/>
    </location>
    <ligand>
        <name>NAD(+)</name>
        <dbReference type="ChEBI" id="CHEBI:57540"/>
    </ligand>
</feature>
<feature type="site" description="Activates thiol group during catalysis" evidence="1">
    <location>
        <position position="182"/>
    </location>
</feature>
<name>E4PD_ECO27</name>
<organism>
    <name type="scientific">Escherichia coli O127:H6 (strain E2348/69 / EPEC)</name>
    <dbReference type="NCBI Taxonomy" id="574521"/>
    <lineage>
        <taxon>Bacteria</taxon>
        <taxon>Pseudomonadati</taxon>
        <taxon>Pseudomonadota</taxon>
        <taxon>Gammaproteobacteria</taxon>
        <taxon>Enterobacterales</taxon>
        <taxon>Enterobacteriaceae</taxon>
        <taxon>Escherichia</taxon>
    </lineage>
</organism>
<reference key="1">
    <citation type="journal article" date="2009" name="J. Bacteriol.">
        <title>Complete genome sequence and comparative genome analysis of enteropathogenic Escherichia coli O127:H6 strain E2348/69.</title>
        <authorList>
            <person name="Iguchi A."/>
            <person name="Thomson N.R."/>
            <person name="Ogura Y."/>
            <person name="Saunders D."/>
            <person name="Ooka T."/>
            <person name="Henderson I.R."/>
            <person name="Harris D."/>
            <person name="Asadulghani M."/>
            <person name="Kurokawa K."/>
            <person name="Dean P."/>
            <person name="Kenny B."/>
            <person name="Quail M.A."/>
            <person name="Thurston S."/>
            <person name="Dougan G."/>
            <person name="Hayashi T."/>
            <person name="Parkhill J."/>
            <person name="Frankel G."/>
        </authorList>
    </citation>
    <scope>NUCLEOTIDE SEQUENCE [LARGE SCALE GENOMIC DNA]</scope>
    <source>
        <strain>E2348/69 / EPEC</strain>
    </source>
</reference>